<accession>C3NH78</accession>
<reference key="1">
    <citation type="journal article" date="2009" name="Proc. Natl. Acad. Sci. U.S.A.">
        <title>Biogeography of the Sulfolobus islandicus pan-genome.</title>
        <authorList>
            <person name="Reno M.L."/>
            <person name="Held N.L."/>
            <person name="Fields C.J."/>
            <person name="Burke P.V."/>
            <person name="Whitaker R.J."/>
        </authorList>
    </citation>
    <scope>NUCLEOTIDE SEQUENCE [LARGE SCALE GENOMIC DNA]</scope>
    <source>
        <strain>Y.N.15.51 / Yellowstone #2</strain>
    </source>
</reference>
<dbReference type="EMBL" id="CP001404">
    <property type="protein sequence ID" value="ACP48488.1"/>
    <property type="molecule type" value="Genomic_DNA"/>
</dbReference>
<dbReference type="RefSeq" id="WP_012717434.1">
    <property type="nucleotide sequence ID" value="NC_012623.1"/>
</dbReference>
<dbReference type="SMR" id="C3NH78"/>
<dbReference type="GeneID" id="7809788"/>
<dbReference type="KEGG" id="sin:YN1551_1396"/>
<dbReference type="HOGENOM" id="CLU_111362_3_0_2"/>
<dbReference type="Proteomes" id="UP000006818">
    <property type="component" value="Chromosome"/>
</dbReference>
<dbReference type="GO" id="GO:0005509">
    <property type="term" value="F:calcium ion binding"/>
    <property type="evidence" value="ECO:0007669"/>
    <property type="project" value="UniProtKB-UniRule"/>
</dbReference>
<dbReference type="GO" id="GO:0006388">
    <property type="term" value="P:tRNA splicing, via endonucleolytic cleavage and ligation"/>
    <property type="evidence" value="ECO:0007669"/>
    <property type="project" value="UniProtKB-UniRule"/>
</dbReference>
<dbReference type="Gene3D" id="3.55.10.10">
    <property type="entry name" value="Archease domain"/>
    <property type="match status" value="1"/>
</dbReference>
<dbReference type="HAMAP" id="MF_01222">
    <property type="entry name" value="Archease_arch"/>
    <property type="match status" value="1"/>
</dbReference>
<dbReference type="InterPro" id="IPR002804">
    <property type="entry name" value="Archease"/>
</dbReference>
<dbReference type="InterPro" id="IPR022952">
    <property type="entry name" value="Archease_arc"/>
</dbReference>
<dbReference type="InterPro" id="IPR023572">
    <property type="entry name" value="Archease_dom"/>
</dbReference>
<dbReference type="InterPro" id="IPR036820">
    <property type="entry name" value="Archease_dom_sf"/>
</dbReference>
<dbReference type="NCBIfam" id="NF001617">
    <property type="entry name" value="PRK00407.1"/>
    <property type="match status" value="1"/>
</dbReference>
<dbReference type="PANTHER" id="PTHR12682">
    <property type="entry name" value="ARCHEASE"/>
    <property type="match status" value="1"/>
</dbReference>
<dbReference type="PANTHER" id="PTHR12682:SF11">
    <property type="entry name" value="PROTEIN ARCHEASE"/>
    <property type="match status" value="1"/>
</dbReference>
<dbReference type="Pfam" id="PF01951">
    <property type="entry name" value="Archease"/>
    <property type="match status" value="1"/>
</dbReference>
<dbReference type="SUPFAM" id="SSF69819">
    <property type="entry name" value="MTH1598-like"/>
    <property type="match status" value="1"/>
</dbReference>
<proteinExistence type="inferred from homology"/>
<evidence type="ECO:0000250" key="1"/>
<evidence type="ECO:0000255" key="2">
    <source>
        <dbReference type="HAMAP-Rule" id="MF_01222"/>
    </source>
</evidence>
<name>ARCH_SACI1</name>
<comment type="function">
    <text evidence="1">Activates the tRNA-splicing ligase complex by facilitating the enzymatic turnover of catalytic subunit RtcB. Acts by promoting the guanylylation of RtcB, a key intermediate step in tRNA ligation. Can also alter the NTP specificity of RtcB such that ATP, dGTP or ITP is used efficiently (By similarity).</text>
</comment>
<comment type="similarity">
    <text evidence="2">Belongs to the archease family.</text>
</comment>
<sequence length="139" mass="16388">MRSFEFFEHTADVGIRAYGKSLEEAFSNAALGVFEIITDTSKVKPIEYREIYLNGYDLENLLYKWIEELLYYYDSELMVFSKFDLMIDQDSMTLEGKAWGEKFNGKIHERRTVVKAMTYHQLSIEKTENCYVITFVVDI</sequence>
<organism>
    <name type="scientific">Saccharolobus islandicus (strain Y.N.15.51 / Yellowstone #2)</name>
    <name type="common">Sulfolobus islandicus</name>
    <dbReference type="NCBI Taxonomy" id="419942"/>
    <lineage>
        <taxon>Archaea</taxon>
        <taxon>Thermoproteota</taxon>
        <taxon>Thermoprotei</taxon>
        <taxon>Sulfolobales</taxon>
        <taxon>Sulfolobaceae</taxon>
        <taxon>Saccharolobus</taxon>
    </lineage>
</organism>
<feature type="chain" id="PRO_1000213975" description="Protein archease">
    <location>
        <begin position="1"/>
        <end position="139"/>
    </location>
</feature>
<feature type="binding site" evidence="1">
    <location>
        <position position="12"/>
    </location>
    <ligand>
        <name>Ca(2+)</name>
        <dbReference type="ChEBI" id="CHEBI:29108"/>
    </ligand>
</feature>
<feature type="binding site" evidence="1">
    <location>
        <position position="138"/>
    </location>
    <ligand>
        <name>Ca(2+)</name>
        <dbReference type="ChEBI" id="CHEBI:29108"/>
    </ligand>
</feature>
<feature type="binding site" evidence="1">
    <location>
        <position position="139"/>
    </location>
    <ligand>
        <name>Ca(2+)</name>
        <dbReference type="ChEBI" id="CHEBI:29108"/>
    </ligand>
</feature>
<gene>
    <name type="ordered locus">YN1551_1396</name>
</gene>
<keyword id="KW-0106">Calcium</keyword>
<keyword id="KW-0479">Metal-binding</keyword>
<keyword id="KW-0819">tRNA processing</keyword>
<protein>
    <recommendedName>
        <fullName evidence="2">Protein archease</fullName>
    </recommendedName>
</protein>